<organism evidence="3">
    <name type="scientific">Epinephelus aeneus</name>
    <name type="common">White grouper</name>
    <name type="synonym">Serranus aeneus</name>
    <dbReference type="NCBI Taxonomy" id="179536"/>
    <lineage>
        <taxon>Eukaryota</taxon>
        <taxon>Metazoa</taxon>
        <taxon>Chordata</taxon>
        <taxon>Craniata</taxon>
        <taxon>Vertebrata</taxon>
        <taxon>Euteleostomi</taxon>
        <taxon>Actinopterygii</taxon>
        <taxon>Neopterygii</taxon>
        <taxon>Teleostei</taxon>
        <taxon>Neoteleostei</taxon>
        <taxon>Acanthomorphata</taxon>
        <taxon>Eupercaria</taxon>
        <taxon>Perciformes</taxon>
        <taxon>Serranoidei</taxon>
        <taxon>Serranidae</taxon>
        <taxon>Epinephelinae</taxon>
        <taxon>Epinephelini</taxon>
        <taxon>Epinephelus</taxon>
    </lineage>
</organism>
<dbReference type="GO" id="GO:0005581">
    <property type="term" value="C:collagen trimer"/>
    <property type="evidence" value="ECO:0007669"/>
    <property type="project" value="UniProtKB-KW"/>
</dbReference>
<dbReference type="GO" id="GO:0005576">
    <property type="term" value="C:extracellular region"/>
    <property type="evidence" value="ECO:0007669"/>
    <property type="project" value="UniProtKB-KW"/>
</dbReference>
<dbReference type="GO" id="GO:0005201">
    <property type="term" value="F:extracellular matrix structural constituent"/>
    <property type="evidence" value="ECO:0007669"/>
    <property type="project" value="InterPro"/>
</dbReference>
<dbReference type="Gene3D" id="2.60.120.1000">
    <property type="match status" value="1"/>
</dbReference>
<dbReference type="InterPro" id="IPR008160">
    <property type="entry name" value="Collagen"/>
</dbReference>
<dbReference type="InterPro" id="IPR050938">
    <property type="entry name" value="Collagen_Structural_Proteins"/>
</dbReference>
<dbReference type="InterPro" id="IPR000885">
    <property type="entry name" value="Fib_collagen_C"/>
</dbReference>
<dbReference type="PANTHER" id="PTHR37456:SF6">
    <property type="entry name" value="COLLAGEN ALPHA-1(XXIII) CHAIN-LIKE ISOFORM X2"/>
    <property type="match status" value="1"/>
</dbReference>
<dbReference type="PANTHER" id="PTHR37456">
    <property type="entry name" value="SI:CH211-266K2.1"/>
    <property type="match status" value="1"/>
</dbReference>
<dbReference type="Pfam" id="PF01410">
    <property type="entry name" value="COLFI"/>
    <property type="match status" value="1"/>
</dbReference>
<dbReference type="Pfam" id="PF01391">
    <property type="entry name" value="Collagen"/>
    <property type="match status" value="12"/>
</dbReference>
<reference evidence="4" key="1">
    <citation type="submission" date="2023-05" db="UniProtKB">
        <title>Grouping groupers in the Mediterranean: ecological baselines revealed by ancient proteins.</title>
        <authorList>
            <person name="Winter R.M."/>
            <person name="de Kock W."/>
            <person name="Mackie M."/>
            <person name="Ramsoe M."/>
            <person name="Desidera E."/>
            <person name="Collins M."/>
            <person name="Guidetti P."/>
            <person name="Presslee S."/>
            <person name="Munoz-Alegre M."/>
            <person name="Oueslati T."/>
            <person name="Morales-Muniz A."/>
            <person name="Michailidis D."/>
            <person name="van den Hurk Y."/>
            <person name="Cakirlar C."/>
        </authorList>
    </citation>
    <scope>PROTEIN SEQUENCE</scope>
    <scope>IDENTIFICATION BY MASS SPECTROMETRY</scope>
    <source>
        <tissue evidence="3">Bone</tissue>
    </source>
</reference>
<keyword id="KW-0176">Collagen</keyword>
<keyword id="KW-0903">Direct protein sequencing</keyword>
<keyword id="KW-0272">Extracellular matrix</keyword>
<keyword id="KW-0964">Secreted</keyword>
<feature type="chain" id="PRO_0000459606" description="Collagen, type I, alpha 1b">
    <location>
        <begin position="1"/>
        <end position="1029"/>
    </location>
</feature>
<feature type="domain" description="Fibrillar collagen NC1" evidence="1">
    <location>
        <begin position="999"/>
        <end position="1029"/>
    </location>
</feature>
<feature type="region of interest" description="Disordered" evidence="2">
    <location>
        <begin position="1"/>
        <end position="990"/>
    </location>
</feature>
<feature type="compositionally biased region" description="Pro residues" evidence="2">
    <location>
        <begin position="13"/>
        <end position="33"/>
    </location>
</feature>
<feature type="compositionally biased region" description="Low complexity" evidence="2">
    <location>
        <begin position="34"/>
        <end position="57"/>
    </location>
</feature>
<feature type="compositionally biased region" description="Basic and acidic residues" evidence="2">
    <location>
        <begin position="67"/>
        <end position="81"/>
    </location>
</feature>
<feature type="compositionally biased region" description="Low complexity" evidence="2">
    <location>
        <begin position="82"/>
        <end position="91"/>
    </location>
</feature>
<feature type="compositionally biased region" description="Low complexity" evidence="2">
    <location>
        <begin position="120"/>
        <end position="129"/>
    </location>
</feature>
<feature type="compositionally biased region" description="Low complexity" evidence="2">
    <location>
        <begin position="136"/>
        <end position="147"/>
    </location>
</feature>
<feature type="compositionally biased region" description="Gly residues" evidence="2">
    <location>
        <begin position="163"/>
        <end position="182"/>
    </location>
</feature>
<feature type="compositionally biased region" description="Low complexity" evidence="2">
    <location>
        <begin position="199"/>
        <end position="223"/>
    </location>
</feature>
<feature type="compositionally biased region" description="Low complexity" evidence="2">
    <location>
        <begin position="233"/>
        <end position="267"/>
    </location>
</feature>
<feature type="compositionally biased region" description="Low complexity" evidence="2">
    <location>
        <begin position="299"/>
        <end position="309"/>
    </location>
</feature>
<feature type="compositionally biased region" description="Gly residues" evidence="2">
    <location>
        <begin position="310"/>
        <end position="322"/>
    </location>
</feature>
<feature type="compositionally biased region" description="Low complexity" evidence="2">
    <location>
        <begin position="323"/>
        <end position="351"/>
    </location>
</feature>
<feature type="compositionally biased region" description="Low complexity" evidence="2">
    <location>
        <begin position="429"/>
        <end position="465"/>
    </location>
</feature>
<feature type="compositionally biased region" description="Gly residues" evidence="2">
    <location>
        <begin position="466"/>
        <end position="477"/>
    </location>
</feature>
<feature type="compositionally biased region" description="Low complexity" evidence="2">
    <location>
        <begin position="478"/>
        <end position="497"/>
    </location>
</feature>
<feature type="compositionally biased region" description="Gly residues" evidence="2">
    <location>
        <begin position="498"/>
        <end position="507"/>
    </location>
</feature>
<feature type="compositionally biased region" description="Gly residues" evidence="2">
    <location>
        <begin position="531"/>
        <end position="540"/>
    </location>
</feature>
<feature type="compositionally biased region" description="Low complexity" evidence="2">
    <location>
        <begin position="571"/>
        <end position="580"/>
    </location>
</feature>
<feature type="compositionally biased region" description="Low complexity" evidence="2">
    <location>
        <begin position="593"/>
        <end position="620"/>
    </location>
</feature>
<feature type="compositionally biased region" description="Gly residues" evidence="2">
    <location>
        <begin position="621"/>
        <end position="630"/>
    </location>
</feature>
<feature type="compositionally biased region" description="Gly residues" evidence="2">
    <location>
        <begin position="645"/>
        <end position="654"/>
    </location>
</feature>
<feature type="compositionally biased region" description="Low complexity" evidence="2">
    <location>
        <begin position="655"/>
        <end position="665"/>
    </location>
</feature>
<feature type="compositionally biased region" description="Low complexity" evidence="2">
    <location>
        <begin position="694"/>
        <end position="722"/>
    </location>
</feature>
<feature type="compositionally biased region" description="Low complexity" evidence="2">
    <location>
        <begin position="731"/>
        <end position="743"/>
    </location>
</feature>
<feature type="compositionally biased region" description="Low complexity" evidence="2">
    <location>
        <begin position="830"/>
        <end position="839"/>
    </location>
</feature>
<feature type="compositionally biased region" description="Low complexity" evidence="2">
    <location>
        <begin position="855"/>
        <end position="869"/>
    </location>
</feature>
<feature type="compositionally biased region" description="Basic and acidic residues" evidence="2">
    <location>
        <begin position="870"/>
        <end position="884"/>
    </location>
</feature>
<feature type="compositionally biased region" description="Low complexity" evidence="2">
    <location>
        <begin position="906"/>
        <end position="934"/>
    </location>
</feature>
<feature type="compositionally biased region" description="Pro residues" evidence="2">
    <location>
        <begin position="952"/>
        <end position="967"/>
    </location>
</feature>
<feature type="non-consecutive residues" evidence="3">
    <location>
        <begin position="90"/>
        <end position="91"/>
    </location>
</feature>
<feature type="non-consecutive residues" evidence="3">
    <location>
        <begin position="127"/>
        <end position="128"/>
    </location>
</feature>
<feature type="non-consecutive residues" evidence="3">
    <location>
        <begin position="228"/>
        <end position="229"/>
    </location>
</feature>
<feature type="non-consecutive residues" evidence="3">
    <location>
        <begin position="470"/>
        <end position="471"/>
    </location>
</feature>
<feature type="non-consecutive residues" evidence="3">
    <location>
        <begin position="726"/>
        <end position="727"/>
    </location>
</feature>
<feature type="non-consecutive residues" evidence="3">
    <location>
        <begin position="738"/>
        <end position="739"/>
    </location>
</feature>
<feature type="non-consecutive residues" evidence="3">
    <location>
        <begin position="883"/>
        <end position="884"/>
    </location>
</feature>
<feature type="non-consecutive residues" evidence="3">
    <location>
        <begin position="992"/>
        <end position="993"/>
    </location>
</feature>
<feature type="non-consecutive residues" evidence="3">
    <location>
        <begin position="1001"/>
        <end position="1002"/>
    </location>
</feature>
<feature type="non-terminal residue" evidence="3">
    <location>
        <position position="1"/>
    </location>
</feature>
<name>CO1AB_EPIAE</name>
<evidence type="ECO:0000255" key="1">
    <source>
        <dbReference type="PROSITE-ProRule" id="PRU00793"/>
    </source>
</evidence>
<evidence type="ECO:0000256" key="2">
    <source>
        <dbReference type="SAM" id="MobiDB-lite"/>
    </source>
</evidence>
<evidence type="ECO:0000303" key="3">
    <source ref="1"/>
</evidence>
<evidence type="ECO:0000305" key="4"/>
<protein>
    <recommendedName>
        <fullName evidence="4">Collagen, type I, alpha 1b</fullName>
        <shortName evidence="4">col1a1b</shortName>
    </recommendedName>
    <alternativeName>
        <fullName evidence="4">Alpha-1 type I collagen</fullName>
    </alternativeName>
</protein>
<comment type="subcellular location">
    <subcellularLocation>
        <location evidence="1">Secreted</location>
        <location evidence="1">Extracellular space</location>
        <location evidence="1">Extracellular matrix</location>
    </subcellularLocation>
</comment>
<comment type="similarity">
    <text evidence="1">Belongs to the fibrillar collagen family.</text>
</comment>
<sequence>QMSYVDHSKSSGPPQPGPMGPMGPRGPPGPPGSSGPQGFTGPPGEPGEPGASGAMGSRGPSGPPGKNGDDGEPGKPGRPGERGAAGPQGARGFSGLDGAKGDAGPAGPKGESGAPGENGVPGVMGARGRPGPPGPSGARGNDGNTGPXGPPGXTGPAGPPGFPGGAGAKGETGPAGGRGNEGPQGARGEPGNPGPAGPAGPAGSPGTDGAPGAKGSPGAAGLAGAPGFGPAGAQGAVGAPGPKGNNGDPGASGPKGEPGAKGEPGPAGVQGLPGPSGEEGKRGARGEPGGAGPRGPPGERGAPGARGFPGADGGAGGKGAPGERGAPGALGAQGATGESGSPGAPGAPGSKGVTGSPGSPGPDGKTGPAGVAGQDGRPGPPGSAGARGQPGVMGFPGPKGPAGESGKPGERGPSGATGAVGAPGKDGDVGAPGPSGVAGPAGEKGEQGPAGPPGFQGLPGPQGATGETGKGLGGPTGPRGAPGPAGNDGAKGEPGAAGAPGGLGAPGMQGMPGERGAAGLPGAKGERGDAGGKGGDGAPGKDGARGMTGSLGVPGPPGAQGEKGEGGAVGVAGPTGPRGAPGERGETGPPGPAGFAGPPGADGQPGAKGETGDSGPKGDAGAPGPGGPVGASGPQGPAGPTGPKGARGGAGPPGATGFPGPAGRVGPPGPAGAAGPPGPVGPVGKDGARGARGETGAAGRPGEAGAAGAPGPSGEKGSPGXDGAPGGLPGPQGLAGQRGLPGQRGERGFSGLPGPSGEPGKQGPSGPVGERGPPGPAGPPGLSGAPGEAGREGSQGHDGAPGRDGSAGPKGDRGESGMAGPPGAPGAPGAPGAVGPSGKSGDRGETGPAGPAGPSGPAGVRGPAGPAGAKGDRGEAGEAGDRGGHRGFTGMQGLPGPAGAHGERGPAGASGPAGPRGPAGSNGAPGKDGMNGLPGPLGPPGPRGRNGEMGPAGPPGPPGPAGPPGPPGSGFDFVSQPLQEKAPDPFRGGHYRLRSPDGTQKLPLLDLAPMDVGAPDQEFGVEVGPVCFL</sequence>
<proteinExistence type="evidence at protein level"/>
<accession>C0HM92</accession>